<gene>
    <name evidence="1" type="primary">rplQ</name>
    <name type="ordered locus">ABSDF0449</name>
</gene>
<protein>
    <recommendedName>
        <fullName evidence="1">Large ribosomal subunit protein bL17</fullName>
    </recommendedName>
    <alternativeName>
        <fullName evidence="2">50S ribosomal protein L17</fullName>
    </alternativeName>
</protein>
<feature type="chain" id="PRO_1000144360" description="Large ribosomal subunit protein bL17">
    <location>
        <begin position="1"/>
        <end position="125"/>
    </location>
</feature>
<accession>B0VQU4</accession>
<sequence>MRHRNSGVKLGRTSSHRKAMFQNLANSLFEHELIKTTLPKAKELRRVAEPLITLAKNDTVANRRLAFARTRNAATVGKLFTVLGPRYKERNGGYLRVLKAGFRAGDAAPMAYVELVDREVNTSAE</sequence>
<proteinExistence type="inferred from homology"/>
<evidence type="ECO:0000255" key="1">
    <source>
        <dbReference type="HAMAP-Rule" id="MF_01368"/>
    </source>
</evidence>
<evidence type="ECO:0000305" key="2"/>
<reference key="1">
    <citation type="journal article" date="2008" name="PLoS ONE">
        <title>Comparative analysis of Acinetobacters: three genomes for three lifestyles.</title>
        <authorList>
            <person name="Vallenet D."/>
            <person name="Nordmann P."/>
            <person name="Barbe V."/>
            <person name="Poirel L."/>
            <person name="Mangenot S."/>
            <person name="Bataille E."/>
            <person name="Dossat C."/>
            <person name="Gas S."/>
            <person name="Kreimeyer A."/>
            <person name="Lenoble P."/>
            <person name="Oztas S."/>
            <person name="Poulain J."/>
            <person name="Segurens B."/>
            <person name="Robert C."/>
            <person name="Abergel C."/>
            <person name="Claverie J.-M."/>
            <person name="Raoult D."/>
            <person name="Medigue C."/>
            <person name="Weissenbach J."/>
            <person name="Cruveiller S."/>
        </authorList>
    </citation>
    <scope>NUCLEOTIDE SEQUENCE [LARGE SCALE GENOMIC DNA]</scope>
    <source>
        <strain>SDF</strain>
    </source>
</reference>
<keyword id="KW-0687">Ribonucleoprotein</keyword>
<keyword id="KW-0689">Ribosomal protein</keyword>
<organism>
    <name type="scientific">Acinetobacter baumannii (strain SDF)</name>
    <dbReference type="NCBI Taxonomy" id="509170"/>
    <lineage>
        <taxon>Bacteria</taxon>
        <taxon>Pseudomonadati</taxon>
        <taxon>Pseudomonadota</taxon>
        <taxon>Gammaproteobacteria</taxon>
        <taxon>Moraxellales</taxon>
        <taxon>Moraxellaceae</taxon>
        <taxon>Acinetobacter</taxon>
        <taxon>Acinetobacter calcoaceticus/baumannii complex</taxon>
    </lineage>
</organism>
<comment type="subunit">
    <text evidence="1">Part of the 50S ribosomal subunit. Contacts protein L32.</text>
</comment>
<comment type="similarity">
    <text evidence="1">Belongs to the bacterial ribosomal protein bL17 family.</text>
</comment>
<dbReference type="EMBL" id="CU468230">
    <property type="protein sequence ID" value="CAO99840.1"/>
    <property type="molecule type" value="Genomic_DNA"/>
</dbReference>
<dbReference type="SMR" id="B0VQU4"/>
<dbReference type="KEGG" id="abm:ABSDF0449"/>
<dbReference type="HOGENOM" id="CLU_074407_2_0_6"/>
<dbReference type="Proteomes" id="UP000001741">
    <property type="component" value="Chromosome"/>
</dbReference>
<dbReference type="GO" id="GO:0022625">
    <property type="term" value="C:cytosolic large ribosomal subunit"/>
    <property type="evidence" value="ECO:0007669"/>
    <property type="project" value="TreeGrafter"/>
</dbReference>
<dbReference type="GO" id="GO:0003735">
    <property type="term" value="F:structural constituent of ribosome"/>
    <property type="evidence" value="ECO:0007669"/>
    <property type="project" value="InterPro"/>
</dbReference>
<dbReference type="GO" id="GO:0006412">
    <property type="term" value="P:translation"/>
    <property type="evidence" value="ECO:0007669"/>
    <property type="project" value="UniProtKB-UniRule"/>
</dbReference>
<dbReference type="FunFam" id="3.90.1030.10:FF:000001">
    <property type="entry name" value="50S ribosomal protein L17"/>
    <property type="match status" value="1"/>
</dbReference>
<dbReference type="Gene3D" id="3.90.1030.10">
    <property type="entry name" value="Ribosomal protein L17"/>
    <property type="match status" value="1"/>
</dbReference>
<dbReference type="HAMAP" id="MF_01368">
    <property type="entry name" value="Ribosomal_bL17"/>
    <property type="match status" value="1"/>
</dbReference>
<dbReference type="InterPro" id="IPR000456">
    <property type="entry name" value="Ribosomal_bL17"/>
</dbReference>
<dbReference type="InterPro" id="IPR047859">
    <property type="entry name" value="Ribosomal_bL17_CS"/>
</dbReference>
<dbReference type="InterPro" id="IPR036373">
    <property type="entry name" value="Ribosomal_bL17_sf"/>
</dbReference>
<dbReference type="NCBIfam" id="TIGR00059">
    <property type="entry name" value="L17"/>
    <property type="match status" value="1"/>
</dbReference>
<dbReference type="PANTHER" id="PTHR14413:SF16">
    <property type="entry name" value="LARGE RIBOSOMAL SUBUNIT PROTEIN BL17M"/>
    <property type="match status" value="1"/>
</dbReference>
<dbReference type="PANTHER" id="PTHR14413">
    <property type="entry name" value="RIBOSOMAL PROTEIN L17"/>
    <property type="match status" value="1"/>
</dbReference>
<dbReference type="Pfam" id="PF01196">
    <property type="entry name" value="Ribosomal_L17"/>
    <property type="match status" value="1"/>
</dbReference>
<dbReference type="SUPFAM" id="SSF64263">
    <property type="entry name" value="Prokaryotic ribosomal protein L17"/>
    <property type="match status" value="1"/>
</dbReference>
<dbReference type="PROSITE" id="PS01167">
    <property type="entry name" value="RIBOSOMAL_L17"/>
    <property type="match status" value="1"/>
</dbReference>
<name>RL17_ACIBS</name>